<organism>
    <name type="scientific">Staphylococcus aureus (strain JH1)</name>
    <dbReference type="NCBI Taxonomy" id="359787"/>
    <lineage>
        <taxon>Bacteria</taxon>
        <taxon>Bacillati</taxon>
        <taxon>Bacillota</taxon>
        <taxon>Bacilli</taxon>
        <taxon>Bacillales</taxon>
        <taxon>Staphylococcaceae</taxon>
        <taxon>Staphylococcus</taxon>
    </lineage>
</organism>
<comment type="function">
    <text evidence="1">May play a role in DNA repair. It seems to be involved in an RecBC-independent recombinational process of DNA repair. It may act with RecF and RecO.</text>
</comment>
<comment type="similarity">
    <text evidence="1">Belongs to the RecR family.</text>
</comment>
<feature type="chain" id="PRO_1000074135" description="Recombination protein RecR">
    <location>
        <begin position="1"/>
        <end position="198"/>
    </location>
</feature>
<feature type="domain" description="Toprim" evidence="1">
    <location>
        <begin position="80"/>
        <end position="175"/>
    </location>
</feature>
<feature type="zinc finger region" description="C4-type" evidence="1">
    <location>
        <begin position="57"/>
        <end position="72"/>
    </location>
</feature>
<evidence type="ECO:0000255" key="1">
    <source>
        <dbReference type="HAMAP-Rule" id="MF_00017"/>
    </source>
</evidence>
<keyword id="KW-0227">DNA damage</keyword>
<keyword id="KW-0233">DNA recombination</keyword>
<keyword id="KW-0234">DNA repair</keyword>
<keyword id="KW-0479">Metal-binding</keyword>
<keyword id="KW-0862">Zinc</keyword>
<keyword id="KW-0863">Zinc-finger</keyword>
<dbReference type="EMBL" id="CP000736">
    <property type="protein sequence ID" value="ABR51372.1"/>
    <property type="molecule type" value="Genomic_DNA"/>
</dbReference>
<dbReference type="SMR" id="A6TYV4"/>
<dbReference type="KEGG" id="sah:SaurJH1_0514"/>
<dbReference type="HOGENOM" id="CLU_060739_1_0_9"/>
<dbReference type="GO" id="GO:0003677">
    <property type="term" value="F:DNA binding"/>
    <property type="evidence" value="ECO:0007669"/>
    <property type="project" value="UniProtKB-UniRule"/>
</dbReference>
<dbReference type="GO" id="GO:0008270">
    <property type="term" value="F:zinc ion binding"/>
    <property type="evidence" value="ECO:0007669"/>
    <property type="project" value="UniProtKB-KW"/>
</dbReference>
<dbReference type="GO" id="GO:0006310">
    <property type="term" value="P:DNA recombination"/>
    <property type="evidence" value="ECO:0007669"/>
    <property type="project" value="UniProtKB-UniRule"/>
</dbReference>
<dbReference type="GO" id="GO:0006281">
    <property type="term" value="P:DNA repair"/>
    <property type="evidence" value="ECO:0007669"/>
    <property type="project" value="UniProtKB-UniRule"/>
</dbReference>
<dbReference type="CDD" id="cd01025">
    <property type="entry name" value="TOPRIM_recR"/>
    <property type="match status" value="1"/>
</dbReference>
<dbReference type="Gene3D" id="3.30.60.80">
    <property type="match status" value="1"/>
</dbReference>
<dbReference type="Gene3D" id="3.40.1360.10">
    <property type="match status" value="1"/>
</dbReference>
<dbReference type="Gene3D" id="6.10.250.240">
    <property type="match status" value="1"/>
</dbReference>
<dbReference type="Gene3D" id="1.10.8.420">
    <property type="entry name" value="RecR Domain 1"/>
    <property type="match status" value="1"/>
</dbReference>
<dbReference type="HAMAP" id="MF_00017">
    <property type="entry name" value="RecR"/>
    <property type="match status" value="1"/>
</dbReference>
<dbReference type="InterPro" id="IPR000093">
    <property type="entry name" value="DNA_Rcmb_RecR"/>
</dbReference>
<dbReference type="InterPro" id="IPR003583">
    <property type="entry name" value="Hlx-hairpin-Hlx_DNA-bd_motif"/>
</dbReference>
<dbReference type="InterPro" id="IPR023627">
    <property type="entry name" value="Rcmb_RecR"/>
</dbReference>
<dbReference type="InterPro" id="IPR015967">
    <property type="entry name" value="Rcmb_RecR_Znf"/>
</dbReference>
<dbReference type="InterPro" id="IPR006171">
    <property type="entry name" value="TOPRIM_dom"/>
</dbReference>
<dbReference type="InterPro" id="IPR034137">
    <property type="entry name" value="TOPRIM_RecR"/>
</dbReference>
<dbReference type="NCBIfam" id="TIGR00615">
    <property type="entry name" value="recR"/>
    <property type="match status" value="1"/>
</dbReference>
<dbReference type="PANTHER" id="PTHR30446">
    <property type="entry name" value="RECOMBINATION PROTEIN RECR"/>
    <property type="match status" value="1"/>
</dbReference>
<dbReference type="PANTHER" id="PTHR30446:SF0">
    <property type="entry name" value="RECOMBINATION PROTEIN RECR"/>
    <property type="match status" value="1"/>
</dbReference>
<dbReference type="Pfam" id="PF21175">
    <property type="entry name" value="RecR_C"/>
    <property type="match status" value="1"/>
</dbReference>
<dbReference type="Pfam" id="PF21176">
    <property type="entry name" value="RecR_HhH"/>
    <property type="match status" value="1"/>
</dbReference>
<dbReference type="Pfam" id="PF02132">
    <property type="entry name" value="RecR_ZnF"/>
    <property type="match status" value="1"/>
</dbReference>
<dbReference type="Pfam" id="PF13662">
    <property type="entry name" value="Toprim_4"/>
    <property type="match status" value="1"/>
</dbReference>
<dbReference type="SMART" id="SM00278">
    <property type="entry name" value="HhH1"/>
    <property type="match status" value="1"/>
</dbReference>
<dbReference type="SMART" id="SM00493">
    <property type="entry name" value="TOPRIM"/>
    <property type="match status" value="1"/>
</dbReference>
<dbReference type="SUPFAM" id="SSF111304">
    <property type="entry name" value="Recombination protein RecR"/>
    <property type="match status" value="1"/>
</dbReference>
<dbReference type="PROSITE" id="PS01300">
    <property type="entry name" value="RECR"/>
    <property type="match status" value="1"/>
</dbReference>
<dbReference type="PROSITE" id="PS50880">
    <property type="entry name" value="TOPRIM"/>
    <property type="match status" value="1"/>
</dbReference>
<sequence>MHYPEPISKLIDSFMKLPGIGPKTAQRLAFHTLDMKEDDVVQFAKALVDVKRELTYCSVCGHITENDPCYICEDKQRDRSVICVVEDDKDVIAMEKMREYKGLYHVLHGSISPMDGIGPEDINIPSLIERLKSDEVSELILAMNPNLEGESTAMYISRLVKPIGIKVTRLAQGLSVGGDLEYADEVTLSKAIAGRTEM</sequence>
<name>RECR_STAA2</name>
<protein>
    <recommendedName>
        <fullName evidence="1">Recombination protein RecR</fullName>
    </recommendedName>
</protein>
<accession>A6TYV4</accession>
<reference key="1">
    <citation type="submission" date="2007-06" db="EMBL/GenBank/DDBJ databases">
        <title>Complete sequence of chromosome of Staphylococcus aureus subsp. aureus JH1.</title>
        <authorList>
            <consortium name="US DOE Joint Genome Institute"/>
            <person name="Copeland A."/>
            <person name="Lucas S."/>
            <person name="Lapidus A."/>
            <person name="Barry K."/>
            <person name="Detter J.C."/>
            <person name="Glavina del Rio T."/>
            <person name="Hammon N."/>
            <person name="Israni S."/>
            <person name="Dalin E."/>
            <person name="Tice H."/>
            <person name="Pitluck S."/>
            <person name="Chain P."/>
            <person name="Malfatti S."/>
            <person name="Shin M."/>
            <person name="Vergez L."/>
            <person name="Schmutz J."/>
            <person name="Larimer F."/>
            <person name="Land M."/>
            <person name="Hauser L."/>
            <person name="Kyrpides N."/>
            <person name="Ivanova N."/>
            <person name="Tomasz A."/>
            <person name="Richardson P."/>
        </authorList>
    </citation>
    <scope>NUCLEOTIDE SEQUENCE [LARGE SCALE GENOMIC DNA]</scope>
    <source>
        <strain>JH1</strain>
    </source>
</reference>
<gene>
    <name evidence="1" type="primary">recR</name>
    <name type="ordered locus">SaurJH1_0514</name>
</gene>
<proteinExistence type="inferred from homology"/>